<comment type="similarity">
    <text evidence="1">Belongs to the UPF0180 family.</text>
</comment>
<evidence type="ECO:0000255" key="1">
    <source>
        <dbReference type="HAMAP-Rule" id="MF_00506"/>
    </source>
</evidence>
<name>Y1317_BACP2</name>
<feature type="chain" id="PRO_1000060846" description="UPF0180 protein BPUM_1317">
    <location>
        <begin position="1"/>
        <end position="80"/>
    </location>
</feature>
<accession>A8FCN3</accession>
<proteinExistence type="inferred from homology"/>
<organism>
    <name type="scientific">Bacillus pumilus (strain SAFR-032)</name>
    <dbReference type="NCBI Taxonomy" id="315750"/>
    <lineage>
        <taxon>Bacteria</taxon>
        <taxon>Bacillati</taxon>
        <taxon>Bacillota</taxon>
        <taxon>Bacilli</taxon>
        <taxon>Bacillales</taxon>
        <taxon>Bacillaceae</taxon>
        <taxon>Bacillus</taxon>
    </lineage>
</organism>
<protein>
    <recommendedName>
        <fullName evidence="1">UPF0180 protein BPUM_1317</fullName>
    </recommendedName>
</protein>
<dbReference type="EMBL" id="CP000813">
    <property type="protein sequence ID" value="ABV62000.1"/>
    <property type="molecule type" value="Genomic_DNA"/>
</dbReference>
<dbReference type="RefSeq" id="WP_003211408.1">
    <property type="nucleotide sequence ID" value="NZ_VEIS01000028.1"/>
</dbReference>
<dbReference type="SMR" id="A8FCN3"/>
<dbReference type="STRING" id="315750.BPUM_1317"/>
<dbReference type="KEGG" id="bpu:BPUM_1317"/>
<dbReference type="eggNOG" id="ENOG503307C">
    <property type="taxonomic scope" value="Bacteria"/>
</dbReference>
<dbReference type="HOGENOM" id="CLU_187365_0_0_9"/>
<dbReference type="OrthoDB" id="1708042at2"/>
<dbReference type="Proteomes" id="UP000001355">
    <property type="component" value="Chromosome"/>
</dbReference>
<dbReference type="HAMAP" id="MF_00506">
    <property type="entry name" value="UPF0180"/>
    <property type="match status" value="1"/>
</dbReference>
<dbReference type="InterPro" id="IPR005370">
    <property type="entry name" value="UPF0180"/>
</dbReference>
<dbReference type="NCBIfam" id="NF002845">
    <property type="entry name" value="PRK03094.1"/>
    <property type="match status" value="1"/>
</dbReference>
<dbReference type="Pfam" id="PF03698">
    <property type="entry name" value="UPF0180"/>
    <property type="match status" value="1"/>
</dbReference>
<gene>
    <name type="ordered locus">BPUM_1317</name>
</gene>
<sequence length="80" mass="8812">MTRIGVEPSLSDVEELLKQKGYDVVRIQNEQQMDQCDCYVVTGLDSNVLGISDTTTKASVITASGMTADEICQEVEQRVQ</sequence>
<reference key="1">
    <citation type="journal article" date="2007" name="PLoS ONE">
        <title>Paradoxical DNA repair and peroxide resistance gene conservation in Bacillus pumilus SAFR-032.</title>
        <authorList>
            <person name="Gioia J."/>
            <person name="Yerrapragada S."/>
            <person name="Qin X."/>
            <person name="Jiang H."/>
            <person name="Igboeli O.C."/>
            <person name="Muzny D."/>
            <person name="Dugan-Rocha S."/>
            <person name="Ding Y."/>
            <person name="Hawes A."/>
            <person name="Liu W."/>
            <person name="Perez L."/>
            <person name="Kovar C."/>
            <person name="Dinh H."/>
            <person name="Lee S."/>
            <person name="Nazareth L."/>
            <person name="Blyth P."/>
            <person name="Holder M."/>
            <person name="Buhay C."/>
            <person name="Tirumalai M.R."/>
            <person name="Liu Y."/>
            <person name="Dasgupta I."/>
            <person name="Bokhetache L."/>
            <person name="Fujita M."/>
            <person name="Karouia F."/>
            <person name="Eswara Moorthy P."/>
            <person name="Siefert J."/>
            <person name="Uzman A."/>
            <person name="Buzumbo P."/>
            <person name="Verma A."/>
            <person name="Zwiya H."/>
            <person name="McWilliams B.D."/>
            <person name="Olowu A."/>
            <person name="Clinkenbeard K.D."/>
            <person name="Newcombe D."/>
            <person name="Golebiewski L."/>
            <person name="Petrosino J.F."/>
            <person name="Nicholson W.L."/>
            <person name="Fox G.E."/>
            <person name="Venkateswaran K."/>
            <person name="Highlander S.K."/>
            <person name="Weinstock G.M."/>
        </authorList>
    </citation>
    <scope>NUCLEOTIDE SEQUENCE [LARGE SCALE GENOMIC DNA]</scope>
    <source>
        <strain>SAFR-032</strain>
    </source>
</reference>